<proteinExistence type="evidence at protein level"/>
<name>RPOA_XANCP</name>
<keyword id="KW-0903">Direct protein sequencing</keyword>
<keyword id="KW-0240">DNA-directed RNA polymerase</keyword>
<keyword id="KW-0548">Nucleotidyltransferase</keyword>
<keyword id="KW-1185">Reference proteome</keyword>
<keyword id="KW-0804">Transcription</keyword>
<keyword id="KW-0808">Transferase</keyword>
<feature type="initiator methionine" description="Removed" evidence="2">
    <location>
        <position position="1"/>
    </location>
</feature>
<feature type="chain" id="PRO_0000175424" description="DNA-directed RNA polymerase subunit alpha">
    <location>
        <begin position="2"/>
        <end position="332"/>
    </location>
</feature>
<feature type="region of interest" description="Alpha N-terminal domain (alpha-NTD)" evidence="1">
    <location>
        <begin position="2"/>
        <end position="234"/>
    </location>
</feature>
<feature type="region of interest" description="Alpha C-terminal domain (alpha-CTD)" evidence="1">
    <location>
        <begin position="248"/>
        <end position="332"/>
    </location>
</feature>
<comment type="function">
    <text>DNA-dependent RNA polymerase catalyzes the transcription of DNA into RNA using the four ribonucleoside triphosphates as substrates.</text>
</comment>
<comment type="catalytic activity">
    <reaction>
        <text>RNA(n) + a ribonucleoside 5'-triphosphate = RNA(n+1) + diphosphate</text>
        <dbReference type="Rhea" id="RHEA:21248"/>
        <dbReference type="Rhea" id="RHEA-COMP:14527"/>
        <dbReference type="Rhea" id="RHEA-COMP:17342"/>
        <dbReference type="ChEBI" id="CHEBI:33019"/>
        <dbReference type="ChEBI" id="CHEBI:61557"/>
        <dbReference type="ChEBI" id="CHEBI:140395"/>
        <dbReference type="EC" id="2.7.7.6"/>
    </reaction>
</comment>
<comment type="subunit">
    <text evidence="1">Homodimer. The RNAP catalytic core consists of 2 alpha, 1 beta, 1 beta' and 1 omega subunit. When a sigma factor is associated with the core the holoenzyme is formed, which can initiate transcription (By similarity).</text>
</comment>
<comment type="domain">
    <text evidence="1">The N-terminal domain is essential for RNAP assembly and basal transcription, whereas the C-terminal domain is involved in interaction with transcriptional regulators and with upstream promoter elements.</text>
</comment>
<comment type="similarity">
    <text evidence="3">Belongs to the RNA polymerase alpha chain family.</text>
</comment>
<evidence type="ECO:0000250" key="1"/>
<evidence type="ECO:0000269" key="2">
    <source>
    </source>
</evidence>
<evidence type="ECO:0000305" key="3"/>
<protein>
    <recommendedName>
        <fullName>DNA-directed RNA polymerase subunit alpha</fullName>
        <shortName>RNAP subunit alpha</shortName>
        <ecNumber>2.7.7.6</ecNumber>
    </recommendedName>
    <alternativeName>
        <fullName>RNA polymerase subunit alpha</fullName>
    </alternativeName>
    <alternativeName>
        <fullName>Transcriptase subunit alpha</fullName>
    </alternativeName>
</protein>
<sequence>MTVTANQVLRPRGPQIERLTDNRAKVVIEPLERGYGHTLGNALRRVLLSSIPGFAITEVEIDGVLHEYTTVEGLQEDVLDVLLNLKDVAIRMHSGDSATLSLSKQGPGTVTAADIRTDHNVEIINGDHVICHLTKDTALNMRLKIERGFGYQPAAARRRPDEETRTIGRLMLDASFSPVRRVAYAVEAARVEQRTDLDKLVIDIETNGTIDAEEAVRTAADILSDQLSVFGDFTHRDRGAAKPAASGVDPVLLRPIDDLELTVRSANCLKAESIYYIGDLIQKTEVELLKTPNLGKKSLTEIKEVLAQRGLALGMKLENWPPAGVAQHGMLG</sequence>
<dbReference type="EC" id="2.7.7.6"/>
<dbReference type="EMBL" id="U79735">
    <property type="protein sequence ID" value="AAD00325.2"/>
    <property type="molecule type" value="Genomic_DNA"/>
</dbReference>
<dbReference type="EMBL" id="AE008922">
    <property type="protein sequence ID" value="AAM40229.1"/>
    <property type="molecule type" value="Genomic_DNA"/>
</dbReference>
<dbReference type="RefSeq" id="NP_636305.1">
    <property type="nucleotide sequence ID" value="NC_003902.1"/>
</dbReference>
<dbReference type="RefSeq" id="WP_002811635.1">
    <property type="nucleotide sequence ID" value="NC_003902.1"/>
</dbReference>
<dbReference type="SMR" id="P0A0Y1"/>
<dbReference type="STRING" id="190485.XCC0919"/>
<dbReference type="EnsemblBacteria" id="AAM40229">
    <property type="protein sequence ID" value="AAM40229"/>
    <property type="gene ID" value="XCC0919"/>
</dbReference>
<dbReference type="KEGG" id="xcc:XCC0919"/>
<dbReference type="PATRIC" id="fig|190485.4.peg.991"/>
<dbReference type="eggNOG" id="COG0202">
    <property type="taxonomic scope" value="Bacteria"/>
</dbReference>
<dbReference type="HOGENOM" id="CLU_053084_0_1_6"/>
<dbReference type="OrthoDB" id="9805706at2"/>
<dbReference type="BRENDA" id="2.7.7.6">
    <property type="organism ID" value="6708"/>
</dbReference>
<dbReference type="PRO" id="PR:P0A0Y1"/>
<dbReference type="Proteomes" id="UP000001010">
    <property type="component" value="Chromosome"/>
</dbReference>
<dbReference type="GO" id="GO:0005737">
    <property type="term" value="C:cytoplasm"/>
    <property type="evidence" value="ECO:0000318"/>
    <property type="project" value="GO_Central"/>
</dbReference>
<dbReference type="GO" id="GO:0000428">
    <property type="term" value="C:DNA-directed RNA polymerase complex"/>
    <property type="evidence" value="ECO:0007669"/>
    <property type="project" value="UniProtKB-KW"/>
</dbReference>
<dbReference type="GO" id="GO:0003677">
    <property type="term" value="F:DNA binding"/>
    <property type="evidence" value="ECO:0007669"/>
    <property type="project" value="UniProtKB-UniRule"/>
</dbReference>
<dbReference type="GO" id="GO:0003899">
    <property type="term" value="F:DNA-directed RNA polymerase activity"/>
    <property type="evidence" value="ECO:0007669"/>
    <property type="project" value="UniProtKB-UniRule"/>
</dbReference>
<dbReference type="GO" id="GO:0046983">
    <property type="term" value="F:protein dimerization activity"/>
    <property type="evidence" value="ECO:0007669"/>
    <property type="project" value="InterPro"/>
</dbReference>
<dbReference type="GO" id="GO:0006351">
    <property type="term" value="P:DNA-templated transcription"/>
    <property type="evidence" value="ECO:0007669"/>
    <property type="project" value="UniProtKB-UniRule"/>
</dbReference>
<dbReference type="CDD" id="cd06928">
    <property type="entry name" value="RNAP_alpha_NTD"/>
    <property type="match status" value="1"/>
</dbReference>
<dbReference type="FunFam" id="1.10.150.20:FF:000001">
    <property type="entry name" value="DNA-directed RNA polymerase subunit alpha"/>
    <property type="match status" value="1"/>
</dbReference>
<dbReference type="FunFam" id="2.170.120.12:FF:000001">
    <property type="entry name" value="DNA-directed RNA polymerase subunit alpha"/>
    <property type="match status" value="1"/>
</dbReference>
<dbReference type="Gene3D" id="1.10.150.20">
    <property type="entry name" value="5' to 3' exonuclease, C-terminal subdomain"/>
    <property type="match status" value="1"/>
</dbReference>
<dbReference type="Gene3D" id="2.170.120.12">
    <property type="entry name" value="DNA-directed RNA polymerase, insert domain"/>
    <property type="match status" value="1"/>
</dbReference>
<dbReference type="Gene3D" id="3.30.1360.10">
    <property type="entry name" value="RNA polymerase, RBP11-like subunit"/>
    <property type="match status" value="1"/>
</dbReference>
<dbReference type="HAMAP" id="MF_00059">
    <property type="entry name" value="RNApol_bact_RpoA"/>
    <property type="match status" value="1"/>
</dbReference>
<dbReference type="InterPro" id="IPR011262">
    <property type="entry name" value="DNA-dir_RNA_pol_insert"/>
</dbReference>
<dbReference type="InterPro" id="IPR011263">
    <property type="entry name" value="DNA-dir_RNA_pol_RpoA/D/Rpb3"/>
</dbReference>
<dbReference type="InterPro" id="IPR011773">
    <property type="entry name" value="DNA-dir_RpoA"/>
</dbReference>
<dbReference type="InterPro" id="IPR036603">
    <property type="entry name" value="RBP11-like"/>
</dbReference>
<dbReference type="InterPro" id="IPR011260">
    <property type="entry name" value="RNAP_asu_C"/>
</dbReference>
<dbReference type="InterPro" id="IPR036643">
    <property type="entry name" value="RNApol_insert_sf"/>
</dbReference>
<dbReference type="NCBIfam" id="NF003513">
    <property type="entry name" value="PRK05182.1-2"/>
    <property type="match status" value="1"/>
</dbReference>
<dbReference type="NCBIfam" id="NF003519">
    <property type="entry name" value="PRK05182.2-5"/>
    <property type="match status" value="1"/>
</dbReference>
<dbReference type="NCBIfam" id="TIGR02027">
    <property type="entry name" value="rpoA"/>
    <property type="match status" value="1"/>
</dbReference>
<dbReference type="Pfam" id="PF01000">
    <property type="entry name" value="RNA_pol_A_bac"/>
    <property type="match status" value="1"/>
</dbReference>
<dbReference type="Pfam" id="PF03118">
    <property type="entry name" value="RNA_pol_A_CTD"/>
    <property type="match status" value="1"/>
</dbReference>
<dbReference type="Pfam" id="PF01193">
    <property type="entry name" value="RNA_pol_L"/>
    <property type="match status" value="1"/>
</dbReference>
<dbReference type="SMART" id="SM00662">
    <property type="entry name" value="RPOLD"/>
    <property type="match status" value="1"/>
</dbReference>
<dbReference type="SUPFAM" id="SSF47789">
    <property type="entry name" value="C-terminal domain of RNA polymerase alpha subunit"/>
    <property type="match status" value="1"/>
</dbReference>
<dbReference type="SUPFAM" id="SSF56553">
    <property type="entry name" value="Insert subdomain of RNA polymerase alpha subunit"/>
    <property type="match status" value="1"/>
</dbReference>
<dbReference type="SUPFAM" id="SSF55257">
    <property type="entry name" value="RBP11-like subunits of RNA polymerase"/>
    <property type="match status" value="1"/>
</dbReference>
<reference key="1">
    <citation type="journal article" date="2000" name="Biochim. Biophys. Acta">
        <title>Sequence and molecular analysis of the rpoA cluster genes from Xanthomonas campestris pv. campestris.</title>
        <authorList>
            <person name="Lai J.-Y."/>
            <person name="Huang C.-F."/>
            <person name="Tseng Y.-H."/>
            <person name="Yang M.-T."/>
        </authorList>
    </citation>
    <scope>NUCLEOTIDE SEQUENCE [GENOMIC DNA]</scope>
    <scope>PROTEIN SEQUENCE OF 2-16</scope>
    <source>
        <strain>Xc11</strain>
    </source>
</reference>
<reference key="2">
    <citation type="journal article" date="2002" name="Nature">
        <title>Comparison of the genomes of two Xanthomonas pathogens with differing host specificities.</title>
        <authorList>
            <person name="da Silva A.C.R."/>
            <person name="Ferro J.A."/>
            <person name="Reinach F.C."/>
            <person name="Farah C.S."/>
            <person name="Furlan L.R."/>
            <person name="Quaggio R.B."/>
            <person name="Monteiro-Vitorello C.B."/>
            <person name="Van Sluys M.A."/>
            <person name="Almeida N.F. Jr."/>
            <person name="Alves L.M.C."/>
            <person name="do Amaral A.M."/>
            <person name="Bertolini M.C."/>
            <person name="Camargo L.E.A."/>
            <person name="Camarotte G."/>
            <person name="Cannavan F."/>
            <person name="Cardozo J."/>
            <person name="Chambergo F."/>
            <person name="Ciapina L.P."/>
            <person name="Cicarelli R.M.B."/>
            <person name="Coutinho L.L."/>
            <person name="Cursino-Santos J.R."/>
            <person name="El-Dorry H."/>
            <person name="Faria J.B."/>
            <person name="Ferreira A.J.S."/>
            <person name="Ferreira R.C.C."/>
            <person name="Ferro M.I.T."/>
            <person name="Formighieri E.F."/>
            <person name="Franco M.C."/>
            <person name="Greggio C.C."/>
            <person name="Gruber A."/>
            <person name="Katsuyama A.M."/>
            <person name="Kishi L.T."/>
            <person name="Leite R.P."/>
            <person name="Lemos E.G.M."/>
            <person name="Lemos M.V.F."/>
            <person name="Locali E.C."/>
            <person name="Machado M.A."/>
            <person name="Madeira A.M.B.N."/>
            <person name="Martinez-Rossi N.M."/>
            <person name="Martins E.C."/>
            <person name="Meidanis J."/>
            <person name="Menck C.F.M."/>
            <person name="Miyaki C.Y."/>
            <person name="Moon D.H."/>
            <person name="Moreira L.M."/>
            <person name="Novo M.T.M."/>
            <person name="Okura V.K."/>
            <person name="Oliveira M.C."/>
            <person name="Oliveira V.R."/>
            <person name="Pereira H.A."/>
            <person name="Rossi A."/>
            <person name="Sena J.A.D."/>
            <person name="Silva C."/>
            <person name="de Souza R.F."/>
            <person name="Spinola L.A.F."/>
            <person name="Takita M.A."/>
            <person name="Tamura R.E."/>
            <person name="Teixeira E.C."/>
            <person name="Tezza R.I.D."/>
            <person name="Trindade dos Santos M."/>
            <person name="Truffi D."/>
            <person name="Tsai S.M."/>
            <person name="White F.F."/>
            <person name="Setubal J.C."/>
            <person name="Kitajima J.P."/>
        </authorList>
    </citation>
    <scope>NUCLEOTIDE SEQUENCE [LARGE SCALE GENOMIC DNA]</scope>
    <source>
        <strain>ATCC 33913 / DSM 3586 / NCPPB 528 / LMG 568 / P 25</strain>
    </source>
</reference>
<accession>P0A0Y1</accession>
<accession>Q9Z3E7</accession>
<gene>
    <name type="primary">rpoA</name>
    <name type="ordered locus">XCC0919</name>
</gene>
<organism>
    <name type="scientific">Xanthomonas campestris pv. campestris (strain ATCC 33913 / DSM 3586 / NCPPB 528 / LMG 568 / P 25)</name>
    <dbReference type="NCBI Taxonomy" id="190485"/>
    <lineage>
        <taxon>Bacteria</taxon>
        <taxon>Pseudomonadati</taxon>
        <taxon>Pseudomonadota</taxon>
        <taxon>Gammaproteobacteria</taxon>
        <taxon>Lysobacterales</taxon>
        <taxon>Lysobacteraceae</taxon>
        <taxon>Xanthomonas</taxon>
    </lineage>
</organism>